<dbReference type="EC" id="3.6.4.-" evidence="1"/>
<dbReference type="EMBL" id="CP001184">
    <property type="protein sequence ID" value="ACI60255.1"/>
    <property type="molecule type" value="Genomic_DNA"/>
</dbReference>
<dbReference type="RefSeq" id="WP_012560325.1">
    <property type="nucleotide sequence ID" value="NC_011374.1"/>
</dbReference>
<dbReference type="SMR" id="B5ZBT5"/>
<dbReference type="STRING" id="565575.UUR10_0482"/>
<dbReference type="KEGG" id="uue:UUR10_0482"/>
<dbReference type="eggNOG" id="COG2255">
    <property type="taxonomic scope" value="Bacteria"/>
</dbReference>
<dbReference type="HOGENOM" id="CLU_055599_1_0_14"/>
<dbReference type="OrthoDB" id="9804478at2"/>
<dbReference type="Proteomes" id="UP000002018">
    <property type="component" value="Chromosome"/>
</dbReference>
<dbReference type="GO" id="GO:0005737">
    <property type="term" value="C:cytoplasm"/>
    <property type="evidence" value="ECO:0007669"/>
    <property type="project" value="UniProtKB-SubCell"/>
</dbReference>
<dbReference type="GO" id="GO:0048476">
    <property type="term" value="C:Holliday junction resolvase complex"/>
    <property type="evidence" value="ECO:0007669"/>
    <property type="project" value="UniProtKB-UniRule"/>
</dbReference>
<dbReference type="GO" id="GO:0005524">
    <property type="term" value="F:ATP binding"/>
    <property type="evidence" value="ECO:0007669"/>
    <property type="project" value="UniProtKB-UniRule"/>
</dbReference>
<dbReference type="GO" id="GO:0016887">
    <property type="term" value="F:ATP hydrolysis activity"/>
    <property type="evidence" value="ECO:0007669"/>
    <property type="project" value="InterPro"/>
</dbReference>
<dbReference type="GO" id="GO:0000400">
    <property type="term" value="F:four-way junction DNA binding"/>
    <property type="evidence" value="ECO:0007669"/>
    <property type="project" value="UniProtKB-UniRule"/>
</dbReference>
<dbReference type="GO" id="GO:0009378">
    <property type="term" value="F:four-way junction helicase activity"/>
    <property type="evidence" value="ECO:0007669"/>
    <property type="project" value="InterPro"/>
</dbReference>
<dbReference type="GO" id="GO:0006310">
    <property type="term" value="P:DNA recombination"/>
    <property type="evidence" value="ECO:0007669"/>
    <property type="project" value="UniProtKB-UniRule"/>
</dbReference>
<dbReference type="GO" id="GO:0006281">
    <property type="term" value="P:DNA repair"/>
    <property type="evidence" value="ECO:0007669"/>
    <property type="project" value="UniProtKB-UniRule"/>
</dbReference>
<dbReference type="CDD" id="cd00009">
    <property type="entry name" value="AAA"/>
    <property type="match status" value="1"/>
</dbReference>
<dbReference type="Gene3D" id="1.10.8.60">
    <property type="match status" value="1"/>
</dbReference>
<dbReference type="Gene3D" id="3.40.50.300">
    <property type="entry name" value="P-loop containing nucleotide triphosphate hydrolases"/>
    <property type="match status" value="1"/>
</dbReference>
<dbReference type="Gene3D" id="1.10.10.10">
    <property type="entry name" value="Winged helix-like DNA-binding domain superfamily/Winged helix DNA-binding domain"/>
    <property type="match status" value="1"/>
</dbReference>
<dbReference type="HAMAP" id="MF_00016">
    <property type="entry name" value="DNA_HJ_migration_RuvB"/>
    <property type="match status" value="1"/>
</dbReference>
<dbReference type="InterPro" id="IPR003593">
    <property type="entry name" value="AAA+_ATPase"/>
</dbReference>
<dbReference type="InterPro" id="IPR041445">
    <property type="entry name" value="AAA_lid_4"/>
</dbReference>
<dbReference type="InterPro" id="IPR004605">
    <property type="entry name" value="DNA_helicase_Holl-junc_RuvB"/>
</dbReference>
<dbReference type="InterPro" id="IPR027417">
    <property type="entry name" value="P-loop_NTPase"/>
</dbReference>
<dbReference type="InterPro" id="IPR008824">
    <property type="entry name" value="RuvB-like_N"/>
</dbReference>
<dbReference type="InterPro" id="IPR008823">
    <property type="entry name" value="RuvB_C"/>
</dbReference>
<dbReference type="InterPro" id="IPR036388">
    <property type="entry name" value="WH-like_DNA-bd_sf"/>
</dbReference>
<dbReference type="InterPro" id="IPR036390">
    <property type="entry name" value="WH_DNA-bd_sf"/>
</dbReference>
<dbReference type="NCBIfam" id="NF000868">
    <property type="entry name" value="PRK00080.1"/>
    <property type="match status" value="1"/>
</dbReference>
<dbReference type="NCBIfam" id="TIGR00635">
    <property type="entry name" value="ruvB"/>
    <property type="match status" value="1"/>
</dbReference>
<dbReference type="PANTHER" id="PTHR42848">
    <property type="match status" value="1"/>
</dbReference>
<dbReference type="PANTHER" id="PTHR42848:SF1">
    <property type="entry name" value="HOLLIDAY JUNCTION BRANCH MIGRATION COMPLEX SUBUNIT RUVB"/>
    <property type="match status" value="1"/>
</dbReference>
<dbReference type="Pfam" id="PF17864">
    <property type="entry name" value="AAA_lid_4"/>
    <property type="match status" value="1"/>
</dbReference>
<dbReference type="Pfam" id="PF05491">
    <property type="entry name" value="RuvB_C"/>
    <property type="match status" value="1"/>
</dbReference>
<dbReference type="Pfam" id="PF05496">
    <property type="entry name" value="RuvB_N"/>
    <property type="match status" value="1"/>
</dbReference>
<dbReference type="SMART" id="SM00382">
    <property type="entry name" value="AAA"/>
    <property type="match status" value="1"/>
</dbReference>
<dbReference type="SUPFAM" id="SSF52540">
    <property type="entry name" value="P-loop containing nucleoside triphosphate hydrolases"/>
    <property type="match status" value="1"/>
</dbReference>
<dbReference type="SUPFAM" id="SSF46785">
    <property type="entry name" value="Winged helix' DNA-binding domain"/>
    <property type="match status" value="1"/>
</dbReference>
<gene>
    <name evidence="1" type="primary">ruvB</name>
    <name type="ordered locus">UUR10_0482</name>
</gene>
<sequence>MKTNNEFRPQYLKDFIGKDQLKSNLKIYLNATKRLKSSFDHTLLHGLAGTGKTTLATIIANEMGVDCHMTQGNLLNKPVDIINLLSLIKENDVIFVDEIHACGLAAFETLYSVLEDFCIDISIGKDFNAKMTRLKVPHFTLIGATTMLGKIPEPLEERFGHVFYLSEYETSEIAAIILKNNQIHFQINLNDQEIDLIANSAKGIPRLANRLLKRVVDFKINGFDNIKNIFEKIQIYDFGLEEQDINYLNVLYQQENEIGLKSIAQILRLDQYTIETKIEPYLIQHHFINKNLRGRKITAKGIEFLKNNQLIK</sequence>
<reference key="1">
    <citation type="submission" date="2008-10" db="EMBL/GenBank/DDBJ databases">
        <title>Genome sequence of Ureaplasma urealyticum serovar 10 ATCC-33699.</title>
        <authorList>
            <person name="Shrivastava S."/>
            <person name="Methe B.A."/>
            <person name="Glass J."/>
            <person name="White K."/>
            <person name="Duffy L.B."/>
        </authorList>
    </citation>
    <scope>NUCLEOTIDE SEQUENCE [LARGE SCALE GENOMIC DNA]</scope>
    <source>
        <strain>ATCC 33699 / Western</strain>
    </source>
</reference>
<comment type="function">
    <text evidence="1">The RuvA-RuvB-RuvC complex processes Holliday junction (HJ) DNA during genetic recombination and DNA repair, while the RuvA-RuvB complex plays an important role in the rescue of blocked DNA replication forks via replication fork reversal (RFR). RuvA specifically binds to HJ cruciform DNA, conferring on it an open structure. The RuvB hexamer acts as an ATP-dependent pump, pulling dsDNA into and through the RuvAB complex. RuvB forms 2 homohexamers on either side of HJ DNA bound by 1 or 2 RuvA tetramers; 4 subunits per hexamer contact DNA at a time. Coordinated motions by a converter formed by DNA-disengaged RuvB subunits stimulates ATP hydrolysis and nucleotide exchange. Immobilization of the converter enables RuvB to convert the ATP-contained energy into a lever motion, pulling 2 nucleotides of DNA out of the RuvA tetramer per ATP hydrolyzed, thus driving DNA branch migration. The RuvB motors rotate together with the DNA substrate, which together with the progressing nucleotide cycle form the mechanistic basis for DNA recombination by continuous HJ branch migration. Branch migration allows RuvC to scan DNA until it finds its consensus sequence, where it cleaves and resolves cruciform DNA.</text>
</comment>
<comment type="catalytic activity">
    <reaction evidence="1">
        <text>ATP + H2O = ADP + phosphate + H(+)</text>
        <dbReference type="Rhea" id="RHEA:13065"/>
        <dbReference type="ChEBI" id="CHEBI:15377"/>
        <dbReference type="ChEBI" id="CHEBI:15378"/>
        <dbReference type="ChEBI" id="CHEBI:30616"/>
        <dbReference type="ChEBI" id="CHEBI:43474"/>
        <dbReference type="ChEBI" id="CHEBI:456216"/>
    </reaction>
</comment>
<comment type="subunit">
    <text evidence="1">Homohexamer. Forms an RuvA(8)-RuvB(12)-Holliday junction (HJ) complex. HJ DNA is sandwiched between 2 RuvA tetramers; dsDNA enters through RuvA and exits via RuvB. An RuvB hexamer assembles on each DNA strand where it exits the tetramer. Each RuvB hexamer is contacted by two RuvA subunits (via domain III) on 2 adjacent RuvB subunits; this complex drives branch migration. In the full resolvosome a probable DNA-RuvA(4)-RuvB(12)-RuvC(2) complex forms which resolves the HJ.</text>
</comment>
<comment type="subcellular location">
    <subcellularLocation>
        <location evidence="1">Cytoplasm</location>
    </subcellularLocation>
</comment>
<comment type="domain">
    <text evidence="1">Has 3 domains, the large (RuvB-L) and small ATPase (RuvB-S) domains and the C-terminal head (RuvB-H) domain. The head domain binds DNA, while the ATPase domains jointly bind ATP, ADP or are empty depending on the state of the subunit in the translocation cycle. During a single DNA translocation step the structure of each domain remains the same, but their relative positions change.</text>
</comment>
<comment type="similarity">
    <text evidence="1">Belongs to the RuvB family.</text>
</comment>
<feature type="chain" id="PRO_1000089691" description="Holliday junction branch migration complex subunit RuvB">
    <location>
        <begin position="1"/>
        <end position="312"/>
    </location>
</feature>
<feature type="region of interest" description="Large ATPase domain (RuvB-L)" evidence="1">
    <location>
        <begin position="1"/>
        <end position="168"/>
    </location>
</feature>
<feature type="region of interest" description="Small ATPAse domain (RuvB-S)" evidence="1">
    <location>
        <begin position="169"/>
        <end position="234"/>
    </location>
</feature>
<feature type="region of interest" description="Head domain (RuvB-H)" evidence="1">
    <location>
        <begin position="237"/>
        <end position="312"/>
    </location>
</feature>
<feature type="binding site" evidence="1">
    <location>
        <position position="8"/>
    </location>
    <ligand>
        <name>ATP</name>
        <dbReference type="ChEBI" id="CHEBI:30616"/>
    </ligand>
</feature>
<feature type="binding site" evidence="1">
    <location>
        <position position="49"/>
    </location>
    <ligand>
        <name>ATP</name>
        <dbReference type="ChEBI" id="CHEBI:30616"/>
    </ligand>
</feature>
<feature type="binding site" evidence="1">
    <location>
        <position position="52"/>
    </location>
    <ligand>
        <name>ATP</name>
        <dbReference type="ChEBI" id="CHEBI:30616"/>
    </ligand>
</feature>
<feature type="binding site" evidence="1">
    <location>
        <position position="53"/>
    </location>
    <ligand>
        <name>ATP</name>
        <dbReference type="ChEBI" id="CHEBI:30616"/>
    </ligand>
</feature>
<feature type="binding site" evidence="1">
    <location>
        <position position="53"/>
    </location>
    <ligand>
        <name>Mg(2+)</name>
        <dbReference type="ChEBI" id="CHEBI:18420"/>
    </ligand>
</feature>
<feature type="binding site" evidence="1">
    <location>
        <position position="54"/>
    </location>
    <ligand>
        <name>ATP</name>
        <dbReference type="ChEBI" id="CHEBI:30616"/>
    </ligand>
</feature>
<feature type="binding site" evidence="1">
    <location>
        <begin position="115"/>
        <end position="117"/>
    </location>
    <ligand>
        <name>ATP</name>
        <dbReference type="ChEBI" id="CHEBI:30616"/>
    </ligand>
</feature>
<feature type="binding site" evidence="1">
    <location>
        <position position="158"/>
    </location>
    <ligand>
        <name>ATP</name>
        <dbReference type="ChEBI" id="CHEBI:30616"/>
    </ligand>
</feature>
<feature type="binding site" evidence="1">
    <location>
        <position position="168"/>
    </location>
    <ligand>
        <name>ATP</name>
        <dbReference type="ChEBI" id="CHEBI:30616"/>
    </ligand>
</feature>
<feature type="binding site" evidence="1">
    <location>
        <position position="206"/>
    </location>
    <ligand>
        <name>ATP</name>
        <dbReference type="ChEBI" id="CHEBI:30616"/>
    </ligand>
</feature>
<feature type="binding site" evidence="1">
    <location>
        <position position="290"/>
    </location>
    <ligand>
        <name>DNA</name>
        <dbReference type="ChEBI" id="CHEBI:16991"/>
    </ligand>
</feature>
<feature type="binding site" evidence="1">
    <location>
        <position position="295"/>
    </location>
    <ligand>
        <name>DNA</name>
        <dbReference type="ChEBI" id="CHEBI:16991"/>
    </ligand>
</feature>
<proteinExistence type="inferred from homology"/>
<evidence type="ECO:0000255" key="1">
    <source>
        <dbReference type="HAMAP-Rule" id="MF_00016"/>
    </source>
</evidence>
<keyword id="KW-0067">ATP-binding</keyword>
<keyword id="KW-0963">Cytoplasm</keyword>
<keyword id="KW-0227">DNA damage</keyword>
<keyword id="KW-0233">DNA recombination</keyword>
<keyword id="KW-0234">DNA repair</keyword>
<keyword id="KW-0238">DNA-binding</keyword>
<keyword id="KW-0378">Hydrolase</keyword>
<keyword id="KW-0547">Nucleotide-binding</keyword>
<name>RUVB_UREU1</name>
<organism>
    <name type="scientific">Ureaplasma urealyticum serovar 10 (strain ATCC 33699 / Western)</name>
    <dbReference type="NCBI Taxonomy" id="565575"/>
    <lineage>
        <taxon>Bacteria</taxon>
        <taxon>Bacillati</taxon>
        <taxon>Mycoplasmatota</taxon>
        <taxon>Mycoplasmoidales</taxon>
        <taxon>Mycoplasmoidaceae</taxon>
        <taxon>Ureaplasma</taxon>
    </lineage>
</organism>
<protein>
    <recommendedName>
        <fullName evidence="1">Holliday junction branch migration complex subunit RuvB</fullName>
        <ecNumber evidence="1">3.6.4.-</ecNumber>
    </recommendedName>
</protein>
<accession>B5ZBT5</accession>